<organism>
    <name type="scientific">Human cytomegalovirus (strain Merlin)</name>
    <name type="common">HHV-5</name>
    <name type="synonym">Human herpesvirus 5</name>
    <dbReference type="NCBI Taxonomy" id="295027"/>
    <lineage>
        <taxon>Viruses</taxon>
        <taxon>Duplodnaviria</taxon>
        <taxon>Heunggongvirae</taxon>
        <taxon>Peploviricota</taxon>
        <taxon>Herviviricetes</taxon>
        <taxon>Herpesvirales</taxon>
        <taxon>Orthoherpesviridae</taxon>
        <taxon>Betaherpesvirinae</taxon>
        <taxon>Cytomegalovirus</taxon>
        <taxon>Cytomegalovirus humanbeta5</taxon>
        <taxon>Human cytomegalovirus</taxon>
    </lineage>
</organism>
<organismHost>
    <name type="scientific">Homo sapiens</name>
    <name type="common">Human</name>
    <dbReference type="NCBI Taxonomy" id="9606"/>
</organismHost>
<evidence type="ECO:0000255" key="1"/>
<evidence type="ECO:0000305" key="2"/>
<reference key="1">
    <citation type="journal article" date="2004" name="J. Gen. Virol.">
        <title>Genetic content of wild-type human cytomegalovirus.</title>
        <authorList>
            <person name="Dolan A."/>
            <person name="Cunningham C."/>
            <person name="Hector R.D."/>
            <person name="Hassan-Walker A.F."/>
            <person name="Lee L."/>
            <person name="Addison C."/>
            <person name="Dargan D.J."/>
            <person name="McGeoch D.J."/>
            <person name="Gatherer D."/>
            <person name="Emery V.C."/>
            <person name="Griffiths P.D."/>
            <person name="Sinzger C."/>
            <person name="McSharry B.P."/>
            <person name="Wilkinson G.W.G."/>
            <person name="Davison A.J."/>
        </authorList>
    </citation>
    <scope>NUCLEOTIDE SEQUENCE [LARGE SCALE GENOMIC DNA]</scope>
</reference>
<comment type="subcellular location">
    <subcellularLocation>
        <location evidence="2">Host membrane</location>
        <topology evidence="2">Single-pass membrane protein</topology>
    </subcellularLocation>
</comment>
<gene>
    <name type="primary">UL148D</name>
</gene>
<keyword id="KW-1043">Host membrane</keyword>
<keyword id="KW-0472">Membrane</keyword>
<keyword id="KW-1185">Reference proteome</keyword>
<keyword id="KW-0812">Transmembrane</keyword>
<keyword id="KW-1133">Transmembrane helix</keyword>
<protein>
    <recommendedName>
        <fullName>Protein UL148D</fullName>
    </recommendedName>
</protein>
<proteinExistence type="predicted"/>
<feature type="chain" id="PRO_0000418263" description="Protein UL148D">
    <location>
        <begin position="1"/>
        <end position="62"/>
    </location>
</feature>
<feature type="transmembrane region" description="Helical" evidence="1">
    <location>
        <begin position="30"/>
        <end position="50"/>
    </location>
</feature>
<accession>F5HHL7</accession>
<dbReference type="EMBL" id="AY446894">
    <property type="protein sequence ID" value="AAR31689.1"/>
    <property type="molecule type" value="Genomic_DNA"/>
</dbReference>
<dbReference type="RefSeq" id="YP_081585.1">
    <property type="nucleotide sequence ID" value="NC_006273.2"/>
</dbReference>
<dbReference type="SMR" id="F5HHL7"/>
<dbReference type="DNASU" id="3077436"/>
<dbReference type="GeneID" id="3077436"/>
<dbReference type="KEGG" id="vg:3077436"/>
<dbReference type="Proteomes" id="UP000000938">
    <property type="component" value="Segment"/>
</dbReference>
<dbReference type="GO" id="GO:0033644">
    <property type="term" value="C:host cell membrane"/>
    <property type="evidence" value="ECO:0007669"/>
    <property type="project" value="UniProtKB-SubCell"/>
</dbReference>
<dbReference type="GO" id="GO:0016020">
    <property type="term" value="C:membrane"/>
    <property type="evidence" value="ECO:0007669"/>
    <property type="project" value="UniProtKB-KW"/>
</dbReference>
<sequence>MTAPKCVTTTTYLVKTKEQPWWPDNAIRRWWISVAIVIFIGVCLVALMYFTQQQARNGSGSG</sequence>
<name>U148D_HCMVM</name>